<organism>
    <name type="scientific">Xanthobacter autotrophicus (strain ATCC BAA-1158 / Py2)</name>
    <dbReference type="NCBI Taxonomy" id="78245"/>
    <lineage>
        <taxon>Bacteria</taxon>
        <taxon>Pseudomonadati</taxon>
        <taxon>Pseudomonadota</taxon>
        <taxon>Alphaproteobacteria</taxon>
        <taxon>Hyphomicrobiales</taxon>
        <taxon>Xanthobacteraceae</taxon>
        <taxon>Xanthobacter</taxon>
    </lineage>
</organism>
<comment type="function">
    <text evidence="1">One of the primary rRNA binding proteins, this protein initially binds near the 5'-end of the 23S rRNA. It is important during the early stages of 50S assembly. It makes multiple contacts with different domains of the 23S rRNA in the assembled 50S subunit and ribosome.</text>
</comment>
<comment type="function">
    <text evidence="1">Forms part of the polypeptide exit tunnel.</text>
</comment>
<comment type="subunit">
    <text evidence="1">Part of the 50S ribosomal subunit.</text>
</comment>
<comment type="similarity">
    <text evidence="1">Belongs to the universal ribosomal protein uL4 family.</text>
</comment>
<proteinExistence type="inferred from homology"/>
<sequence length="206" mass="22478">MEITVKTLDGIEAGSVTLSDEIFGLEPRADILHRCVTWQLSRRQAGTHRTKGRSEINRTSKKMYKQKGTGNARHGAASAPQFRGGGRAFGPVVRSHAIDLPKKVRALALKHALSSKAKAAQIIVLDKVSLDDPKTKALKEHFAKLGLESVLIVDGAQVEQNVALAARNLPYVDVLPIQGINVYDILRRDTLVLTKAAVDALEARFK</sequence>
<keyword id="KW-1185">Reference proteome</keyword>
<keyword id="KW-0687">Ribonucleoprotein</keyword>
<keyword id="KW-0689">Ribosomal protein</keyword>
<keyword id="KW-0694">RNA-binding</keyword>
<keyword id="KW-0699">rRNA-binding</keyword>
<feature type="chain" id="PRO_1000142208" description="Large ribosomal subunit protein uL4">
    <location>
        <begin position="1"/>
        <end position="206"/>
    </location>
</feature>
<reference key="1">
    <citation type="submission" date="2007-07" db="EMBL/GenBank/DDBJ databases">
        <title>Complete sequence of chromosome of Xanthobacter autotrophicus Py2.</title>
        <authorList>
            <consortium name="US DOE Joint Genome Institute"/>
            <person name="Copeland A."/>
            <person name="Lucas S."/>
            <person name="Lapidus A."/>
            <person name="Barry K."/>
            <person name="Glavina del Rio T."/>
            <person name="Hammon N."/>
            <person name="Israni S."/>
            <person name="Dalin E."/>
            <person name="Tice H."/>
            <person name="Pitluck S."/>
            <person name="Sims D."/>
            <person name="Brettin T."/>
            <person name="Bruce D."/>
            <person name="Detter J.C."/>
            <person name="Han C."/>
            <person name="Tapia R."/>
            <person name="Brainard J."/>
            <person name="Schmutz J."/>
            <person name="Larimer F."/>
            <person name="Land M."/>
            <person name="Hauser L."/>
            <person name="Kyrpides N."/>
            <person name="Kim E."/>
            <person name="Ensigns S.A."/>
            <person name="Richardson P."/>
        </authorList>
    </citation>
    <scope>NUCLEOTIDE SEQUENCE [LARGE SCALE GENOMIC DNA]</scope>
    <source>
        <strain>ATCC BAA-1158 / Py2</strain>
    </source>
</reference>
<protein>
    <recommendedName>
        <fullName evidence="1">Large ribosomal subunit protein uL4</fullName>
    </recommendedName>
    <alternativeName>
        <fullName evidence="2">50S ribosomal protein L4</fullName>
    </alternativeName>
</protein>
<evidence type="ECO:0000255" key="1">
    <source>
        <dbReference type="HAMAP-Rule" id="MF_01328"/>
    </source>
</evidence>
<evidence type="ECO:0000305" key="2"/>
<accession>A7IFY2</accession>
<gene>
    <name evidence="1" type="primary">rplD</name>
    <name type="ordered locus">Xaut_1680</name>
</gene>
<dbReference type="EMBL" id="CP000781">
    <property type="protein sequence ID" value="ABS66925.1"/>
    <property type="molecule type" value="Genomic_DNA"/>
</dbReference>
<dbReference type="SMR" id="A7IFY2"/>
<dbReference type="STRING" id="78245.Xaut_1680"/>
<dbReference type="KEGG" id="xau:Xaut_1680"/>
<dbReference type="eggNOG" id="COG0088">
    <property type="taxonomic scope" value="Bacteria"/>
</dbReference>
<dbReference type="HOGENOM" id="CLU_041575_5_1_5"/>
<dbReference type="OrthoDB" id="9803201at2"/>
<dbReference type="PhylomeDB" id="A7IFY2"/>
<dbReference type="Proteomes" id="UP000002417">
    <property type="component" value="Chromosome"/>
</dbReference>
<dbReference type="GO" id="GO:1990904">
    <property type="term" value="C:ribonucleoprotein complex"/>
    <property type="evidence" value="ECO:0007669"/>
    <property type="project" value="UniProtKB-KW"/>
</dbReference>
<dbReference type="GO" id="GO:0005840">
    <property type="term" value="C:ribosome"/>
    <property type="evidence" value="ECO:0007669"/>
    <property type="project" value="UniProtKB-KW"/>
</dbReference>
<dbReference type="GO" id="GO:0019843">
    <property type="term" value="F:rRNA binding"/>
    <property type="evidence" value="ECO:0007669"/>
    <property type="project" value="UniProtKB-UniRule"/>
</dbReference>
<dbReference type="GO" id="GO:0003735">
    <property type="term" value="F:structural constituent of ribosome"/>
    <property type="evidence" value="ECO:0007669"/>
    <property type="project" value="InterPro"/>
</dbReference>
<dbReference type="GO" id="GO:0006412">
    <property type="term" value="P:translation"/>
    <property type="evidence" value="ECO:0007669"/>
    <property type="project" value="UniProtKB-UniRule"/>
</dbReference>
<dbReference type="Gene3D" id="3.40.1370.10">
    <property type="match status" value="1"/>
</dbReference>
<dbReference type="HAMAP" id="MF_01328_B">
    <property type="entry name" value="Ribosomal_uL4_B"/>
    <property type="match status" value="1"/>
</dbReference>
<dbReference type="InterPro" id="IPR002136">
    <property type="entry name" value="Ribosomal_uL4"/>
</dbReference>
<dbReference type="InterPro" id="IPR013005">
    <property type="entry name" value="Ribosomal_uL4-like"/>
</dbReference>
<dbReference type="InterPro" id="IPR023574">
    <property type="entry name" value="Ribosomal_uL4_dom_sf"/>
</dbReference>
<dbReference type="NCBIfam" id="TIGR03953">
    <property type="entry name" value="rplD_bact"/>
    <property type="match status" value="1"/>
</dbReference>
<dbReference type="PANTHER" id="PTHR10746">
    <property type="entry name" value="50S RIBOSOMAL PROTEIN L4"/>
    <property type="match status" value="1"/>
</dbReference>
<dbReference type="PANTHER" id="PTHR10746:SF6">
    <property type="entry name" value="LARGE RIBOSOMAL SUBUNIT PROTEIN UL4M"/>
    <property type="match status" value="1"/>
</dbReference>
<dbReference type="Pfam" id="PF00573">
    <property type="entry name" value="Ribosomal_L4"/>
    <property type="match status" value="1"/>
</dbReference>
<dbReference type="SUPFAM" id="SSF52166">
    <property type="entry name" value="Ribosomal protein L4"/>
    <property type="match status" value="1"/>
</dbReference>
<name>RL4_XANP2</name>